<organism>
    <name type="scientific">Streptococcus agalactiae serotype III (strain NEM316)</name>
    <dbReference type="NCBI Taxonomy" id="211110"/>
    <lineage>
        <taxon>Bacteria</taxon>
        <taxon>Bacillati</taxon>
        <taxon>Bacillota</taxon>
        <taxon>Bacilli</taxon>
        <taxon>Lactobacillales</taxon>
        <taxon>Streptococcaceae</taxon>
        <taxon>Streptococcus</taxon>
    </lineage>
</organism>
<reference key="1">
    <citation type="journal article" date="2002" name="Mol. Microbiol.">
        <title>Genome sequence of Streptococcus agalactiae, a pathogen causing invasive neonatal disease.</title>
        <authorList>
            <person name="Glaser P."/>
            <person name="Rusniok C."/>
            <person name="Buchrieser C."/>
            <person name="Chevalier F."/>
            <person name="Frangeul L."/>
            <person name="Msadek T."/>
            <person name="Zouine M."/>
            <person name="Couve E."/>
            <person name="Lalioui L."/>
            <person name="Poyart C."/>
            <person name="Trieu-Cuot P."/>
            <person name="Kunst F."/>
        </authorList>
    </citation>
    <scope>NUCLEOTIDE SEQUENCE [LARGE SCALE GENOMIC DNA]</scope>
    <source>
        <strain>NEM316</strain>
    </source>
</reference>
<name>NADE_STRA3</name>
<protein>
    <recommendedName>
        <fullName evidence="1">NH(3)-dependent NAD(+) synthetase</fullName>
        <ecNumber evidence="1">6.3.1.5</ecNumber>
    </recommendedName>
</protein>
<evidence type="ECO:0000255" key="1">
    <source>
        <dbReference type="HAMAP-Rule" id="MF_00193"/>
    </source>
</evidence>
<proteinExistence type="inferred from homology"/>
<dbReference type="EC" id="6.3.1.5" evidence="1"/>
<dbReference type="EMBL" id="AL766844">
    <property type="protein sequence ID" value="CAD45931.1"/>
    <property type="molecule type" value="Genomic_DNA"/>
</dbReference>
<dbReference type="RefSeq" id="WP_000174854.1">
    <property type="nucleotide sequence ID" value="NC_004368.1"/>
</dbReference>
<dbReference type="SMR" id="Q8E771"/>
<dbReference type="KEGG" id="san:nadE"/>
<dbReference type="eggNOG" id="COG0171">
    <property type="taxonomic scope" value="Bacteria"/>
</dbReference>
<dbReference type="HOGENOM" id="CLU_059327_3_0_9"/>
<dbReference type="UniPathway" id="UPA00253">
    <property type="reaction ID" value="UER00333"/>
</dbReference>
<dbReference type="Proteomes" id="UP000000823">
    <property type="component" value="Chromosome"/>
</dbReference>
<dbReference type="GO" id="GO:0005737">
    <property type="term" value="C:cytoplasm"/>
    <property type="evidence" value="ECO:0007669"/>
    <property type="project" value="InterPro"/>
</dbReference>
<dbReference type="GO" id="GO:0005524">
    <property type="term" value="F:ATP binding"/>
    <property type="evidence" value="ECO:0007669"/>
    <property type="project" value="UniProtKB-UniRule"/>
</dbReference>
<dbReference type="GO" id="GO:0004359">
    <property type="term" value="F:glutaminase activity"/>
    <property type="evidence" value="ECO:0007669"/>
    <property type="project" value="InterPro"/>
</dbReference>
<dbReference type="GO" id="GO:0046872">
    <property type="term" value="F:metal ion binding"/>
    <property type="evidence" value="ECO:0007669"/>
    <property type="project" value="UniProtKB-KW"/>
</dbReference>
<dbReference type="GO" id="GO:0003952">
    <property type="term" value="F:NAD+ synthase (glutamine-hydrolyzing) activity"/>
    <property type="evidence" value="ECO:0007669"/>
    <property type="project" value="InterPro"/>
</dbReference>
<dbReference type="GO" id="GO:0008795">
    <property type="term" value="F:NAD+ synthase activity"/>
    <property type="evidence" value="ECO:0007669"/>
    <property type="project" value="UniProtKB-UniRule"/>
</dbReference>
<dbReference type="GO" id="GO:0009435">
    <property type="term" value="P:NAD biosynthetic process"/>
    <property type="evidence" value="ECO:0007669"/>
    <property type="project" value="UniProtKB-UniRule"/>
</dbReference>
<dbReference type="CDD" id="cd00553">
    <property type="entry name" value="NAD_synthase"/>
    <property type="match status" value="1"/>
</dbReference>
<dbReference type="FunFam" id="3.40.50.620:FF:000015">
    <property type="entry name" value="NH(3)-dependent NAD(+) synthetase"/>
    <property type="match status" value="1"/>
</dbReference>
<dbReference type="Gene3D" id="3.40.50.620">
    <property type="entry name" value="HUPs"/>
    <property type="match status" value="1"/>
</dbReference>
<dbReference type="HAMAP" id="MF_00193">
    <property type="entry name" value="NadE_ammonia_dep"/>
    <property type="match status" value="1"/>
</dbReference>
<dbReference type="InterPro" id="IPR022310">
    <property type="entry name" value="NAD/GMP_synthase"/>
</dbReference>
<dbReference type="InterPro" id="IPR003694">
    <property type="entry name" value="NAD_synthase"/>
</dbReference>
<dbReference type="InterPro" id="IPR022926">
    <property type="entry name" value="NH(3)-dep_NAD(+)_synth"/>
</dbReference>
<dbReference type="InterPro" id="IPR014729">
    <property type="entry name" value="Rossmann-like_a/b/a_fold"/>
</dbReference>
<dbReference type="NCBIfam" id="TIGR00552">
    <property type="entry name" value="nadE"/>
    <property type="match status" value="1"/>
</dbReference>
<dbReference type="NCBIfam" id="NF001979">
    <property type="entry name" value="PRK00768.1"/>
    <property type="match status" value="1"/>
</dbReference>
<dbReference type="PANTHER" id="PTHR23090">
    <property type="entry name" value="NH 3 /GLUTAMINE-DEPENDENT NAD + SYNTHETASE"/>
    <property type="match status" value="1"/>
</dbReference>
<dbReference type="PANTHER" id="PTHR23090:SF7">
    <property type="entry name" value="NH(3)-DEPENDENT NAD(+) SYNTHETASE"/>
    <property type="match status" value="1"/>
</dbReference>
<dbReference type="Pfam" id="PF02540">
    <property type="entry name" value="NAD_synthase"/>
    <property type="match status" value="1"/>
</dbReference>
<dbReference type="SUPFAM" id="SSF52402">
    <property type="entry name" value="Adenine nucleotide alpha hydrolases-like"/>
    <property type="match status" value="1"/>
</dbReference>
<sequence length="273" mass="30300">MTLQDQIIKELGVKPVINPSQEIRRSVEFLKDYLLKHSFLKTYVLGISGGQDSTLAGRLAQLAVEELRADTGENYQFIAIRLPYGIQADEEDAQKALDFIKPDIALTINIKEAVDGQVRALNAAGVEITDFNKGNIKARQRMISQYAVAGQYAGAVIGTDHAAENITGFFTKFGDGGADLLPLFRLNKSQGKQLLAELGADKALYEKIPTADLEENKPGIADEIALGVTYQEIDAYLEGKVVSDKSRGIIENWWYKGQHKRHLPITIFDDFWK</sequence>
<gene>
    <name evidence="1" type="primary">nadE</name>
    <name type="ordered locus">gbs0286</name>
</gene>
<comment type="function">
    <text evidence="1">Catalyzes the ATP-dependent amidation of deamido-NAD to form NAD. Uses ammonia as a nitrogen source.</text>
</comment>
<comment type="catalytic activity">
    <reaction evidence="1">
        <text>deamido-NAD(+) + NH4(+) + ATP = AMP + diphosphate + NAD(+) + H(+)</text>
        <dbReference type="Rhea" id="RHEA:21188"/>
        <dbReference type="ChEBI" id="CHEBI:15378"/>
        <dbReference type="ChEBI" id="CHEBI:28938"/>
        <dbReference type="ChEBI" id="CHEBI:30616"/>
        <dbReference type="ChEBI" id="CHEBI:33019"/>
        <dbReference type="ChEBI" id="CHEBI:57540"/>
        <dbReference type="ChEBI" id="CHEBI:58437"/>
        <dbReference type="ChEBI" id="CHEBI:456215"/>
        <dbReference type="EC" id="6.3.1.5"/>
    </reaction>
</comment>
<comment type="pathway">
    <text evidence="1">Cofactor biosynthesis; NAD(+) biosynthesis; NAD(+) from deamido-NAD(+) (ammonia route): step 1/1.</text>
</comment>
<comment type="subunit">
    <text evidence="1">Homodimer.</text>
</comment>
<comment type="similarity">
    <text evidence="1">Belongs to the NAD synthetase family.</text>
</comment>
<feature type="chain" id="PRO_0000152202" description="NH(3)-dependent NAD(+) synthetase">
    <location>
        <begin position="1"/>
        <end position="273"/>
    </location>
</feature>
<feature type="binding site" evidence="1">
    <location>
        <begin position="46"/>
        <end position="53"/>
    </location>
    <ligand>
        <name>ATP</name>
        <dbReference type="ChEBI" id="CHEBI:30616"/>
    </ligand>
</feature>
<feature type="binding site" evidence="1">
    <location>
        <position position="52"/>
    </location>
    <ligand>
        <name>Mg(2+)</name>
        <dbReference type="ChEBI" id="CHEBI:18420"/>
    </ligand>
</feature>
<feature type="binding site" evidence="1">
    <location>
        <position position="139"/>
    </location>
    <ligand>
        <name>deamido-NAD(+)</name>
        <dbReference type="ChEBI" id="CHEBI:58437"/>
    </ligand>
</feature>
<feature type="binding site" evidence="1">
    <location>
        <position position="159"/>
    </location>
    <ligand>
        <name>ATP</name>
        <dbReference type="ChEBI" id="CHEBI:30616"/>
    </ligand>
</feature>
<feature type="binding site" evidence="1">
    <location>
        <position position="164"/>
    </location>
    <ligand>
        <name>Mg(2+)</name>
        <dbReference type="ChEBI" id="CHEBI:18420"/>
    </ligand>
</feature>
<feature type="binding site" evidence="1">
    <location>
        <position position="172"/>
    </location>
    <ligand>
        <name>deamido-NAD(+)</name>
        <dbReference type="ChEBI" id="CHEBI:58437"/>
    </ligand>
</feature>
<feature type="binding site" evidence="1">
    <location>
        <position position="179"/>
    </location>
    <ligand>
        <name>deamido-NAD(+)</name>
        <dbReference type="ChEBI" id="CHEBI:58437"/>
    </ligand>
</feature>
<feature type="binding site" evidence="1">
    <location>
        <position position="188"/>
    </location>
    <ligand>
        <name>ATP</name>
        <dbReference type="ChEBI" id="CHEBI:30616"/>
    </ligand>
</feature>
<feature type="binding site" evidence="1">
    <location>
        <position position="210"/>
    </location>
    <ligand>
        <name>ATP</name>
        <dbReference type="ChEBI" id="CHEBI:30616"/>
    </ligand>
</feature>
<feature type="binding site" evidence="1">
    <location>
        <begin position="259"/>
        <end position="260"/>
    </location>
    <ligand>
        <name>deamido-NAD(+)</name>
        <dbReference type="ChEBI" id="CHEBI:58437"/>
    </ligand>
</feature>
<accession>Q8E771</accession>
<keyword id="KW-0067">ATP-binding</keyword>
<keyword id="KW-0436">Ligase</keyword>
<keyword id="KW-0460">Magnesium</keyword>
<keyword id="KW-0479">Metal-binding</keyword>
<keyword id="KW-0520">NAD</keyword>
<keyword id="KW-0547">Nucleotide-binding</keyword>